<feature type="initiator methionine" description="Removed" evidence="4">
    <location>
        <position position="1"/>
    </location>
</feature>
<feature type="chain" id="PRO_0000189372" description="Ferredoxin-1">
    <location>
        <begin position="2"/>
        <end position="98"/>
    </location>
</feature>
<feature type="domain" description="2Fe-2S ferredoxin-type" evidence="2">
    <location>
        <begin position="4"/>
        <end position="95"/>
    </location>
</feature>
<feature type="binding site">
    <location>
        <position position="41"/>
    </location>
    <ligand>
        <name>[2Fe-2S] cluster</name>
        <dbReference type="ChEBI" id="CHEBI:190135"/>
    </ligand>
</feature>
<feature type="binding site">
    <location>
        <position position="46"/>
    </location>
    <ligand>
        <name>[2Fe-2S] cluster</name>
        <dbReference type="ChEBI" id="CHEBI:190135"/>
    </ligand>
</feature>
<feature type="binding site">
    <location>
        <position position="49"/>
    </location>
    <ligand>
        <name>[2Fe-2S] cluster</name>
        <dbReference type="ChEBI" id="CHEBI:190135"/>
    </ligand>
</feature>
<feature type="binding site">
    <location>
        <position position="79"/>
    </location>
    <ligand>
        <name>[2Fe-2S] cluster</name>
        <dbReference type="ChEBI" id="CHEBI:190135"/>
    </ligand>
</feature>
<feature type="strand" evidence="8">
    <location>
        <begin position="3"/>
        <end position="9"/>
    </location>
</feature>
<feature type="strand" evidence="6">
    <location>
        <begin position="10"/>
        <end position="13"/>
    </location>
</feature>
<feature type="strand" evidence="8">
    <location>
        <begin position="15"/>
        <end position="21"/>
    </location>
</feature>
<feature type="strand" evidence="9">
    <location>
        <begin position="22"/>
        <end position="24"/>
    </location>
</feature>
<feature type="helix" evidence="8">
    <location>
        <begin position="26"/>
        <end position="32"/>
    </location>
</feature>
<feature type="strand" evidence="8">
    <location>
        <begin position="40"/>
        <end position="47"/>
    </location>
</feature>
<feature type="strand" evidence="8">
    <location>
        <begin position="50"/>
        <end position="56"/>
    </location>
</feature>
<feature type="strand" evidence="7">
    <location>
        <begin position="61"/>
        <end position="65"/>
    </location>
</feature>
<feature type="helix" evidence="8">
    <location>
        <begin position="68"/>
        <end position="72"/>
    </location>
</feature>
<feature type="strand" evidence="8">
    <location>
        <begin position="75"/>
        <end position="77"/>
    </location>
</feature>
<feature type="helix" evidence="8">
    <location>
        <begin position="78"/>
        <end position="80"/>
    </location>
</feature>
<feature type="strand" evidence="8">
    <location>
        <begin position="82"/>
        <end position="90"/>
    </location>
</feature>
<feature type="helix" evidence="8">
    <location>
        <begin position="94"/>
        <end position="97"/>
    </location>
</feature>
<gene>
    <name type="primary">petF1</name>
    <name type="synonym">petF</name>
    <name type="ordered locus">tsl1009</name>
</gene>
<reference key="1">
    <citation type="journal article" date="2002" name="DNA Res.">
        <title>Complete genome structure of the thermophilic cyanobacterium Thermosynechococcus elongatus BP-1.</title>
        <authorList>
            <person name="Nakamura Y."/>
            <person name="Kaneko T."/>
            <person name="Sato S."/>
            <person name="Ikeuchi M."/>
            <person name="Katoh H."/>
            <person name="Sasamoto S."/>
            <person name="Watanabe A."/>
            <person name="Iriguchi M."/>
            <person name="Kawashima K."/>
            <person name="Kimura T."/>
            <person name="Kishida Y."/>
            <person name="Kiyokawa C."/>
            <person name="Kohara M."/>
            <person name="Matsumoto M."/>
            <person name="Matsuno A."/>
            <person name="Nakazaki N."/>
            <person name="Shimpo S."/>
            <person name="Sugimoto M."/>
            <person name="Takeuchi C."/>
            <person name="Yamada M."/>
            <person name="Tabata S."/>
        </authorList>
    </citation>
    <scope>NUCLEOTIDE SEQUENCE [LARGE SCALE GENOMIC DNA]</scope>
    <source>
        <strain>NIES-2133 / IAM M-273 / BP-1</strain>
    </source>
</reference>
<reference key="2">
    <citation type="journal article" date="1983" name="Biochim. Biophys. Acta">
        <title>Amino acid sequence of ferredoxin from a thermophilic blue-green alga, Synechococcus sp.</title>
        <authorList>
            <person name="Hase T."/>
            <person name="Matsubara H."/>
            <person name="Koike H."/>
            <person name="Katoh S."/>
        </authorList>
    </citation>
    <scope>PROTEIN SEQUENCE OF 2-98</scope>
</reference>
<reference key="3">
    <citation type="journal article" date="1996" name="Biochemistry">
        <title>Structure of Synechococcus elongatus [Fe2S2] ferredoxin in solution.</title>
        <authorList>
            <person name="Baumann B."/>
            <person name="Sticht H."/>
            <person name="Schaerpf M."/>
            <person name="Sutter M."/>
            <person name="Haehnel W."/>
            <person name="Roesch P."/>
        </authorList>
    </citation>
    <scope>STRUCTURE BY NMR</scope>
    <scope>MASS SPECTROMETRY</scope>
</reference>
<reference key="4">
    <citation type="journal article" date="1997" name="J. Mol. Biol.">
        <title>Solution structure of ferredoxin from the thermophilic cyanobacterium Synechococcus elongatus and its thermostability.</title>
        <authorList>
            <person name="Hatanaka H."/>
            <person name="Tanimura R."/>
            <person name="Katoh S."/>
            <person name="Inagaki F."/>
        </authorList>
    </citation>
    <scope>STRUCTURE BY NMR</scope>
</reference>
<proteinExistence type="evidence at protein level"/>
<accession>P0A3C9</accession>
<accession>P00256</accession>
<accession>P95742</accession>
<evidence type="ECO:0000250" key="1"/>
<evidence type="ECO:0000255" key="2">
    <source>
        <dbReference type="PROSITE-ProRule" id="PRU00465"/>
    </source>
</evidence>
<evidence type="ECO:0000269" key="3">
    <source>
    </source>
</evidence>
<evidence type="ECO:0000269" key="4">
    <source ref="2"/>
</evidence>
<evidence type="ECO:0000305" key="5"/>
<evidence type="ECO:0007829" key="6">
    <source>
        <dbReference type="PDB" id="1ROE"/>
    </source>
</evidence>
<evidence type="ECO:0007829" key="7">
    <source>
        <dbReference type="PDB" id="2CJN"/>
    </source>
</evidence>
<evidence type="ECO:0007829" key="8">
    <source>
        <dbReference type="PDB" id="5AUI"/>
    </source>
</evidence>
<evidence type="ECO:0007829" key="9">
    <source>
        <dbReference type="PDB" id="6KHI"/>
    </source>
</evidence>
<keyword id="KW-0001">2Fe-2S</keyword>
<keyword id="KW-0002">3D-structure</keyword>
<keyword id="KW-0903">Direct protein sequencing</keyword>
<keyword id="KW-0249">Electron transport</keyword>
<keyword id="KW-0408">Iron</keyword>
<keyword id="KW-0411">Iron-sulfur</keyword>
<keyword id="KW-0479">Metal-binding</keyword>
<keyword id="KW-1185">Reference proteome</keyword>
<keyword id="KW-0813">Transport</keyword>
<sequence length="98" mass="10847">MATYKVTLVRPDGSETTIDVPEDEYILDVAEEQGLDLPFSCRAGACSTCAGKLLEGEVDQSDQSFLDDDQIEKGFVLTCVAYPRSDCKILTNQEEELY</sequence>
<comment type="function">
    <text>Ferredoxins are iron-sulfur proteins that transfer electrons in a wide variety of metabolic reactions.</text>
</comment>
<comment type="cofactor">
    <cofactor>
        <name>[2Fe-2S] cluster</name>
        <dbReference type="ChEBI" id="CHEBI:190135"/>
    </cofactor>
    <text>Binds 1 [2Fe-2S] cluster.</text>
</comment>
<comment type="subunit">
    <text evidence="1">Forms a complex with heterodimeric ferredoxin-thioredoxin reductase (FTR) and thioredoxin.</text>
</comment>
<comment type="interaction">
    <interactant intactId="EBI-766786">
        <id>P0A3C9</id>
    </interactant>
    <interactant intactId="EBI-6947306">
        <id>Q8DLW1</id>
        <label>ho1</label>
    </interactant>
    <organismsDiffer>false</organismsDiffer>
    <experiments>2</experiments>
</comment>
<comment type="interaction">
    <interactant intactId="EBI-766786">
        <id>P0A3C9</id>
    </interactant>
    <interactant intactId="EBI-766800">
        <id>Q8DK70</id>
        <label>ispG</label>
    </interactant>
    <organismsDiffer>false</organismsDiffer>
    <experiments>3</experiments>
</comment>
<comment type="mass spectrometry" mass="10715.7" method="Electrospray" evidence="3"/>
<comment type="similarity">
    <text evidence="5">Belongs to the 2Fe2S plant-type ferredoxin family.</text>
</comment>
<organism>
    <name type="scientific">Thermosynechococcus vestitus (strain NIES-2133 / IAM M-273 / BP-1)</name>
    <dbReference type="NCBI Taxonomy" id="197221"/>
    <lineage>
        <taxon>Bacteria</taxon>
        <taxon>Bacillati</taxon>
        <taxon>Cyanobacteriota</taxon>
        <taxon>Cyanophyceae</taxon>
        <taxon>Acaryochloridales</taxon>
        <taxon>Thermosynechococcaceae</taxon>
        <taxon>Thermosynechococcus</taxon>
    </lineage>
</organism>
<name>FER_THEVB</name>
<protein>
    <recommendedName>
        <fullName>Ferredoxin-1</fullName>
    </recommendedName>
    <alternativeName>
        <fullName>Ferredoxin I</fullName>
    </alternativeName>
</protein>
<dbReference type="EMBL" id="BA000039">
    <property type="protein sequence ID" value="BAC08561.1"/>
    <property type="molecule type" value="Genomic_DNA"/>
</dbReference>
<dbReference type="PIR" id="A00259">
    <property type="entry name" value="FEYCT"/>
</dbReference>
<dbReference type="RefSeq" id="NP_681799.1">
    <property type="nucleotide sequence ID" value="NC_004113.1"/>
</dbReference>
<dbReference type="RefSeq" id="WP_011056851.1">
    <property type="nucleotide sequence ID" value="NC_004113.1"/>
</dbReference>
<dbReference type="PDB" id="1ROE">
    <property type="method" value="NMR"/>
    <property type="chains" value="A=2-98"/>
</dbReference>
<dbReference type="PDB" id="2CJN">
    <property type="method" value="NMR"/>
    <property type="chains" value="A=2-98"/>
</dbReference>
<dbReference type="PDB" id="2CJO">
    <property type="method" value="NMR"/>
    <property type="chains" value="A=2-98"/>
</dbReference>
<dbReference type="PDB" id="5AUI">
    <property type="method" value="X-ray"/>
    <property type="resolution" value="1.50 A"/>
    <property type="chains" value="A=2-98"/>
</dbReference>
<dbReference type="PDB" id="5ZF0">
    <property type="method" value="X-ray"/>
    <property type="resolution" value="4.20 A"/>
    <property type="chains" value="P1/P2/P3/P4/P5/P6=2-98"/>
</dbReference>
<dbReference type="PDB" id="6JO2">
    <property type="method" value="X-ray"/>
    <property type="resolution" value="1.55 A"/>
    <property type="chains" value="A=2-98"/>
</dbReference>
<dbReference type="PDB" id="6KHI">
    <property type="method" value="EM"/>
    <property type="resolution" value="3.00 A"/>
    <property type="chains" value="1=1-98"/>
</dbReference>
<dbReference type="PDB" id="6L7O">
    <property type="method" value="EM"/>
    <property type="resolution" value="3.20 A"/>
    <property type="chains" value="R=1-98"/>
</dbReference>
<dbReference type="PDB" id="7FIX">
    <property type="method" value="EM"/>
    <property type="resolution" value="1.97 A"/>
    <property type="chains" value="R1/R2/R3=1-98"/>
</dbReference>
<dbReference type="PDBsum" id="1ROE"/>
<dbReference type="PDBsum" id="2CJN"/>
<dbReference type="PDBsum" id="2CJO"/>
<dbReference type="PDBsum" id="5AUI"/>
<dbReference type="PDBsum" id="5ZF0"/>
<dbReference type="PDBsum" id="6JO2"/>
<dbReference type="PDBsum" id="6KHI"/>
<dbReference type="PDBsum" id="6L7O"/>
<dbReference type="PDBsum" id="7FIX"/>
<dbReference type="EMDB" id="EMD-0849"/>
<dbReference type="EMDB" id="EMD-31605"/>
<dbReference type="EMDB" id="EMD-9989"/>
<dbReference type="SMR" id="P0A3C9"/>
<dbReference type="IntAct" id="P0A3C9">
    <property type="interactions" value="4"/>
</dbReference>
<dbReference type="MINT" id="P0A3C9"/>
<dbReference type="STRING" id="197221.gene:10747601"/>
<dbReference type="EnsemblBacteria" id="BAC08561">
    <property type="protein sequence ID" value="BAC08561"/>
    <property type="gene ID" value="BAC08561"/>
</dbReference>
<dbReference type="KEGG" id="tel:tsl1009"/>
<dbReference type="PATRIC" id="fig|197221.4.peg.1059"/>
<dbReference type="eggNOG" id="COG1018">
    <property type="taxonomic scope" value="Bacteria"/>
</dbReference>
<dbReference type="EvolutionaryTrace" id="P0A3C9"/>
<dbReference type="Proteomes" id="UP000000440">
    <property type="component" value="Chromosome"/>
</dbReference>
<dbReference type="GO" id="GO:0051537">
    <property type="term" value="F:2 iron, 2 sulfur cluster binding"/>
    <property type="evidence" value="ECO:0007669"/>
    <property type="project" value="UniProtKB-KW"/>
</dbReference>
<dbReference type="GO" id="GO:0009055">
    <property type="term" value="F:electron transfer activity"/>
    <property type="evidence" value="ECO:0000314"/>
    <property type="project" value="UniProtKB"/>
</dbReference>
<dbReference type="GO" id="GO:0046872">
    <property type="term" value="F:metal ion binding"/>
    <property type="evidence" value="ECO:0007669"/>
    <property type="project" value="UniProtKB-KW"/>
</dbReference>
<dbReference type="GO" id="GO:0022900">
    <property type="term" value="P:electron transport chain"/>
    <property type="evidence" value="ECO:0007669"/>
    <property type="project" value="InterPro"/>
</dbReference>
<dbReference type="CDD" id="cd00207">
    <property type="entry name" value="fer2"/>
    <property type="match status" value="1"/>
</dbReference>
<dbReference type="FunFam" id="3.10.20.30:FF:000014">
    <property type="entry name" value="Ferredoxin"/>
    <property type="match status" value="1"/>
</dbReference>
<dbReference type="Gene3D" id="3.10.20.30">
    <property type="match status" value="1"/>
</dbReference>
<dbReference type="InterPro" id="IPR036010">
    <property type="entry name" value="2Fe-2S_ferredoxin-like_sf"/>
</dbReference>
<dbReference type="InterPro" id="IPR001041">
    <property type="entry name" value="2Fe-2S_ferredoxin-type"/>
</dbReference>
<dbReference type="InterPro" id="IPR006058">
    <property type="entry name" value="2Fe2S_fd_BS"/>
</dbReference>
<dbReference type="InterPro" id="IPR012675">
    <property type="entry name" value="Beta-grasp_dom_sf"/>
</dbReference>
<dbReference type="InterPro" id="IPR010241">
    <property type="entry name" value="Fd_pln"/>
</dbReference>
<dbReference type="NCBIfam" id="TIGR02008">
    <property type="entry name" value="fdx_plant"/>
    <property type="match status" value="1"/>
</dbReference>
<dbReference type="PANTHER" id="PTHR43112">
    <property type="entry name" value="FERREDOXIN"/>
    <property type="match status" value="1"/>
</dbReference>
<dbReference type="PANTHER" id="PTHR43112:SF3">
    <property type="entry name" value="FERREDOXIN-2, CHLOROPLASTIC"/>
    <property type="match status" value="1"/>
</dbReference>
<dbReference type="Pfam" id="PF00111">
    <property type="entry name" value="Fer2"/>
    <property type="match status" value="1"/>
</dbReference>
<dbReference type="SUPFAM" id="SSF54292">
    <property type="entry name" value="2Fe-2S ferredoxin-like"/>
    <property type="match status" value="1"/>
</dbReference>
<dbReference type="PROSITE" id="PS00197">
    <property type="entry name" value="2FE2S_FER_1"/>
    <property type="match status" value="1"/>
</dbReference>
<dbReference type="PROSITE" id="PS51085">
    <property type="entry name" value="2FE2S_FER_2"/>
    <property type="match status" value="1"/>
</dbReference>